<keyword id="KW-0007">Acetylation</keyword>
<keyword id="KW-0963">Cytoplasm</keyword>
<keyword id="KW-0903">Direct protein sequencing</keyword>
<keyword id="KW-0324">Glycolysis</keyword>
<keyword id="KW-0379">Hydroxylation</keyword>
<keyword id="KW-1017">Isopeptide bond</keyword>
<keyword id="KW-0456">Lyase</keyword>
<keyword id="KW-0597">Phosphoprotein</keyword>
<keyword id="KW-1185">Reference proteome</keyword>
<keyword id="KW-0704">Schiff base</keyword>
<keyword id="KW-0832">Ubl conjugation</keyword>
<sequence length="364" mass="39352">MPHPYPALTPEQKKELADIAHRIVAPGKGILAADESTGSIAKRLQSIGTENTEENRRFYRQLLLTADDRVNPCIGGVILFHETLYQKADDGRPFPQVIKSKGGVVGIKVDKGVVPLAGTNGETTTQGLDGLSERCAQYKKDGADFAKWRCVLKIGEHTPSSLAIMENANVLARYASICQQNGIVPIVEPEILPDGDHDLKRCQYVTEKVLAAVYKALSDHHVYLEGTLLKPNMVTPGHACTQKFSNEEIAMATVTALRRTVPPAVPGVTFLSGGQSEEEASINLNAINKCPLLKPWALTFSYGRALQASALKAWGGKKENLKAAQEEYIKRALANSLACQGKYTPSGQSGAAASESLFISNHAY</sequence>
<comment type="function">
    <text evidence="1 3">Catalyzes the reversible conversion of beta-D-fructose 1,6-bisphosphate (FBP) into two triose phosphate and plays a key role in glycolysis and gluconeogenesis (By similarity). In addition, may also function as scaffolding protein (By similarity).</text>
</comment>
<comment type="catalytic activity">
    <reaction evidence="3">
        <text>beta-D-fructose 1,6-bisphosphate = D-glyceraldehyde 3-phosphate + dihydroxyacetone phosphate</text>
        <dbReference type="Rhea" id="RHEA:14729"/>
        <dbReference type="ChEBI" id="CHEBI:32966"/>
        <dbReference type="ChEBI" id="CHEBI:57642"/>
        <dbReference type="ChEBI" id="CHEBI:59776"/>
        <dbReference type="EC" id="4.1.2.13"/>
    </reaction>
    <physiologicalReaction direction="left-to-right" evidence="3">
        <dbReference type="Rhea" id="RHEA:14730"/>
    </physiologicalReaction>
</comment>
<comment type="pathway">
    <text>Carbohydrate degradation; glycolysis; D-glyceraldehyde 3-phosphate and glycerone phosphate from D-glucose: step 4/4.</text>
</comment>
<comment type="subunit">
    <text evidence="1">Homotetramer. Interacts with SNX9 and WAS. Interacts with FBP2; the interaction blocks FBP2 inhibition by physiological concentrations of AMP and reduces inhibition by Ca(2+) (By similarity).</text>
</comment>
<comment type="interaction">
    <interactant intactId="EBI-522118">
        <id>P05065</id>
    </interactant>
    <interactant intactId="EBI-7473061">
        <id>Q80Z30</id>
        <label>Ppm1e</label>
    </interactant>
    <organismsDiffer>false</organismsDiffer>
    <experiments>2</experiments>
</comment>
<comment type="subcellular location">
    <subcellularLocation>
        <location evidence="2">Cytoplasm</location>
        <location evidence="2">Myofibril</location>
        <location evidence="2">Sarcomere</location>
        <location evidence="2">I band</location>
    </subcellularLocation>
    <subcellularLocation>
        <location evidence="2">Cytoplasm</location>
        <location evidence="2">Myofibril</location>
        <location evidence="2">Sarcomere</location>
        <location evidence="2">M line</location>
    </subcellularLocation>
    <text evidence="2">In skeletal muscle, accumulates around the M line and within the I band, colocalizing with FBP2 on both sides of the Z line in the absence of Ca(2+).</text>
</comment>
<comment type="tissue specificity">
    <text evidence="5">Expressed in muscle, brain and hepatoma cells.</text>
</comment>
<comment type="miscellaneous">
    <text>In vertebrates, three forms of this ubiquitous glycolytic enzyme are found, aldolase A in muscle, aldolase B in liver and aldolase C in brain.</text>
</comment>
<comment type="similarity">
    <text evidence="6">Belongs to the class I fructose-bisphosphate aldolase family.</text>
</comment>
<organism>
    <name type="scientific">Rattus norvegicus</name>
    <name type="common">Rat</name>
    <dbReference type="NCBI Taxonomy" id="10116"/>
    <lineage>
        <taxon>Eukaryota</taxon>
        <taxon>Metazoa</taxon>
        <taxon>Chordata</taxon>
        <taxon>Craniata</taxon>
        <taxon>Vertebrata</taxon>
        <taxon>Euteleostomi</taxon>
        <taxon>Mammalia</taxon>
        <taxon>Eutheria</taxon>
        <taxon>Euarchontoglires</taxon>
        <taxon>Glires</taxon>
        <taxon>Rodentia</taxon>
        <taxon>Myomorpha</taxon>
        <taxon>Muroidea</taxon>
        <taxon>Muridae</taxon>
        <taxon>Murinae</taxon>
        <taxon>Rattus</taxon>
    </lineage>
</organism>
<feature type="initiator methionine" description="Removed" evidence="3">
    <location>
        <position position="1"/>
    </location>
</feature>
<feature type="chain" id="PRO_0000216939" description="Fructose-bisphosphate aldolase A">
    <location>
        <begin position="2"/>
        <end position="364"/>
    </location>
</feature>
<feature type="active site" description="Proton acceptor" evidence="2">
    <location>
        <position position="188"/>
    </location>
</feature>
<feature type="active site" description="Schiff-base intermediate with dihydroxyacetone-P" evidence="2">
    <location>
        <position position="230"/>
    </location>
</feature>
<feature type="binding site" evidence="2">
    <location>
        <position position="43"/>
    </location>
    <ligand>
        <name>beta-D-fructose 1,6-bisphosphate</name>
        <dbReference type="ChEBI" id="CHEBI:32966"/>
    </ligand>
</feature>
<feature type="binding site" evidence="2">
    <location>
        <begin position="272"/>
        <end position="274"/>
    </location>
    <ligand>
        <name>beta-D-fructose 1,6-bisphosphate</name>
        <dbReference type="ChEBI" id="CHEBI:32966"/>
    </ligand>
</feature>
<feature type="binding site" evidence="2">
    <location>
        <position position="301"/>
    </location>
    <ligand>
        <name>beta-D-fructose 1,6-bisphosphate</name>
        <dbReference type="ChEBI" id="CHEBI:32966"/>
    </ligand>
</feature>
<feature type="binding site" evidence="2">
    <location>
        <position position="304"/>
    </location>
    <ligand>
        <name>beta-D-fructose 1,6-bisphosphate</name>
        <dbReference type="ChEBI" id="CHEBI:32966"/>
    </ligand>
</feature>
<feature type="site" description="Necessary for preference for fructose 1,6-bisphosphate over fructose 1-phosphate">
    <location>
        <position position="364"/>
    </location>
</feature>
<feature type="modified residue" description="Phosphotyrosine" evidence="7">
    <location>
        <position position="5"/>
    </location>
</feature>
<feature type="modified residue" description="Phosphothreonine" evidence="7">
    <location>
        <position position="9"/>
    </location>
</feature>
<feature type="modified residue" description="Phosphoserine" evidence="3">
    <location>
        <position position="36"/>
    </location>
</feature>
<feature type="modified residue" description="Phosphoserine" evidence="3">
    <location>
        <position position="39"/>
    </location>
</feature>
<feature type="modified residue" description="N6-acetyllysine; alternate" evidence="3">
    <location>
        <position position="42"/>
    </location>
</feature>
<feature type="modified residue" description="Phosphoserine" evidence="3">
    <location>
        <position position="46"/>
    </location>
</feature>
<feature type="modified residue" description="N6-(2-hydroxyisobutyryl)lysine" evidence="3">
    <location>
        <position position="99"/>
    </location>
</feature>
<feature type="modified residue" description="N6-acetyllysine" evidence="3">
    <location>
        <position position="108"/>
    </location>
</feature>
<feature type="modified residue" description="N6-acetyllysine; alternate" evidence="4">
    <location>
        <position position="111"/>
    </location>
</feature>
<feature type="modified residue" description="N6-malonyllysine; alternate" evidence="1">
    <location>
        <position position="111"/>
    </location>
</feature>
<feature type="modified residue" description="Phosphoserine" evidence="7">
    <location>
        <position position="132"/>
    </location>
</feature>
<feature type="modified residue" description="N6-(2-hydroxyisobutyryl)lysine" evidence="3">
    <location>
        <position position="147"/>
    </location>
</feature>
<feature type="modified residue" description="Phosphoserine" evidence="3">
    <location>
        <position position="272"/>
    </location>
</feature>
<feature type="modified residue" description="N6-malonyllysine" evidence="1">
    <location>
        <position position="312"/>
    </location>
</feature>
<feature type="modified residue" description="N6-acetyllysine" evidence="3">
    <location>
        <position position="330"/>
    </location>
</feature>
<feature type="cross-link" description="Glycyl lysine isopeptide (Lys-Gly) (interchain with G-Cter in SUMO1); alternate" evidence="3">
    <location>
        <position position="42"/>
    </location>
</feature>
<feature type="cross-link" description="Glycyl lysine isopeptide (Lys-Gly) (interchain with G-Cter in SUMO2); alternate" evidence="3">
    <location>
        <position position="42"/>
    </location>
</feature>
<feature type="sequence conflict" description="In Ref. 2; AAA40715." evidence="6" ref="2">
    <original>F</original>
    <variation>S</variation>
    <location>
        <position position="145"/>
    </location>
</feature>
<feature type="sequence conflict" description="In Ref. 2; AAA40715." evidence="6" ref="2">
    <original>M</original>
    <variation>V</variation>
    <location>
        <position position="165"/>
    </location>
</feature>
<feature type="sequence conflict" description="In Ref. 6; AAA40720." evidence="6" ref="6">
    <original>K</original>
    <variation>Q</variation>
    <location>
        <position position="330"/>
    </location>
</feature>
<dbReference type="EC" id="4.1.2.13" evidence="3"/>
<dbReference type="EMBL" id="M12919">
    <property type="protein sequence ID" value="AAA40714.1"/>
    <property type="molecule type" value="mRNA"/>
</dbReference>
<dbReference type="EMBL" id="M14420">
    <property type="protein sequence ID" value="AAA40715.1"/>
    <property type="molecule type" value="mRNA"/>
</dbReference>
<dbReference type="EMBL" id="X04261">
    <property type="protein sequence ID" value="CAA27815.1"/>
    <property type="molecule type" value="Genomic_DNA"/>
</dbReference>
<dbReference type="EMBL" id="X04262">
    <property type="protein sequence ID" value="CAA27815.1"/>
    <property type="status" value="JOINED"/>
    <property type="molecule type" value="Genomic_DNA"/>
</dbReference>
<dbReference type="EMBL" id="X04263">
    <property type="protein sequence ID" value="CAA27815.1"/>
    <property type="status" value="JOINED"/>
    <property type="molecule type" value="Genomic_DNA"/>
</dbReference>
<dbReference type="EMBL" id="X04264">
    <property type="protein sequence ID" value="CAA27815.1"/>
    <property type="status" value="JOINED"/>
    <property type="molecule type" value="Genomic_DNA"/>
</dbReference>
<dbReference type="EMBL" id="BC064440">
    <property type="protein sequence ID" value="AAH64440.1"/>
    <property type="molecule type" value="mRNA"/>
</dbReference>
<dbReference type="EMBL" id="M28282">
    <property type="protein sequence ID" value="AAA40720.1"/>
    <property type="molecule type" value="mRNA"/>
</dbReference>
<dbReference type="PIR" id="A24532">
    <property type="entry name" value="ADRTA"/>
</dbReference>
<dbReference type="RefSeq" id="NP_001170776.1">
    <property type="nucleotide sequence ID" value="NM_001177305.1"/>
</dbReference>
<dbReference type="RefSeq" id="NP_001258465.1">
    <property type="nucleotide sequence ID" value="NM_001271536.1"/>
</dbReference>
<dbReference type="RefSeq" id="NP_036627.1">
    <property type="nucleotide sequence ID" value="NM_012495.2"/>
</dbReference>
<dbReference type="RefSeq" id="XP_006230273.1">
    <property type="nucleotide sequence ID" value="XM_006230211.2"/>
</dbReference>
<dbReference type="SMR" id="P05065"/>
<dbReference type="BioGRID" id="246379">
    <property type="interactions" value="7"/>
</dbReference>
<dbReference type="FunCoup" id="P05065">
    <property type="interactions" value="1691"/>
</dbReference>
<dbReference type="IntAct" id="P05065">
    <property type="interactions" value="8"/>
</dbReference>
<dbReference type="MINT" id="P05065"/>
<dbReference type="STRING" id="10116.ENSRNOP00000068764"/>
<dbReference type="GlyGen" id="P05065">
    <property type="glycosylation" value="2 sites, 1 O-linked glycan (1 site)"/>
</dbReference>
<dbReference type="iPTMnet" id="P05065"/>
<dbReference type="PhosphoSitePlus" id="P05065"/>
<dbReference type="jPOST" id="P05065"/>
<dbReference type="PaxDb" id="10116-ENSRNOP00000032320"/>
<dbReference type="GeneID" id="24189"/>
<dbReference type="KEGG" id="rno:24189"/>
<dbReference type="UCSC" id="RGD:2089">
    <property type="organism name" value="rat"/>
</dbReference>
<dbReference type="AGR" id="RGD:2089"/>
<dbReference type="CTD" id="226"/>
<dbReference type="RGD" id="2089">
    <property type="gene designation" value="Aldoa"/>
</dbReference>
<dbReference type="VEuPathDB" id="HostDB:ENSRNOG00000052802"/>
<dbReference type="VEuPathDB" id="HostDB:ENSRNOG00000067655"/>
<dbReference type="eggNOG" id="KOG1557">
    <property type="taxonomic scope" value="Eukaryota"/>
</dbReference>
<dbReference type="HOGENOM" id="CLU_031243_0_0_1"/>
<dbReference type="InParanoid" id="P05065"/>
<dbReference type="OrthoDB" id="36455at2759"/>
<dbReference type="PhylomeDB" id="P05065"/>
<dbReference type="Reactome" id="R-RNO-114608">
    <property type="pathway name" value="Platelet degranulation"/>
</dbReference>
<dbReference type="Reactome" id="R-RNO-6798695">
    <property type="pathway name" value="Neutrophil degranulation"/>
</dbReference>
<dbReference type="Reactome" id="R-RNO-70171">
    <property type="pathway name" value="Glycolysis"/>
</dbReference>
<dbReference type="Reactome" id="R-RNO-70263">
    <property type="pathway name" value="Gluconeogenesis"/>
</dbReference>
<dbReference type="SABIO-RK" id="P05065"/>
<dbReference type="UniPathway" id="UPA00109">
    <property type="reaction ID" value="UER00183"/>
</dbReference>
<dbReference type="PRO" id="PR:P05065"/>
<dbReference type="Proteomes" id="UP000002494">
    <property type="component" value="Chromosome 1"/>
</dbReference>
<dbReference type="Bgee" id="ENSRNOG00000052802">
    <property type="expression patterns" value="Expressed in skeletal muscle tissue and 20 other cell types or tissues"/>
</dbReference>
<dbReference type="GO" id="GO:0015629">
    <property type="term" value="C:actin cytoskeleton"/>
    <property type="evidence" value="ECO:0000266"/>
    <property type="project" value="RGD"/>
</dbReference>
<dbReference type="GO" id="GO:0005737">
    <property type="term" value="C:cytoplasm"/>
    <property type="evidence" value="ECO:0000314"/>
    <property type="project" value="WormBase"/>
</dbReference>
<dbReference type="GO" id="GO:0005829">
    <property type="term" value="C:cytosol"/>
    <property type="evidence" value="ECO:0000318"/>
    <property type="project" value="GO_Central"/>
</dbReference>
<dbReference type="GO" id="GO:0070062">
    <property type="term" value="C:extracellular exosome"/>
    <property type="evidence" value="ECO:0000266"/>
    <property type="project" value="RGD"/>
</dbReference>
<dbReference type="GO" id="GO:0000792">
    <property type="term" value="C:heterochromatin"/>
    <property type="evidence" value="ECO:0000314"/>
    <property type="project" value="WormBase"/>
</dbReference>
<dbReference type="GO" id="GO:0031674">
    <property type="term" value="C:I band"/>
    <property type="evidence" value="ECO:0007669"/>
    <property type="project" value="UniProtKB-SubCell"/>
</dbReference>
<dbReference type="GO" id="GO:0031430">
    <property type="term" value="C:M band"/>
    <property type="evidence" value="ECO:0007669"/>
    <property type="project" value="UniProtKB-SubCell"/>
</dbReference>
<dbReference type="GO" id="GO:0061827">
    <property type="term" value="C:sperm head"/>
    <property type="evidence" value="ECO:0000266"/>
    <property type="project" value="RGD"/>
</dbReference>
<dbReference type="GO" id="GO:0008092">
    <property type="term" value="F:cytoskeletal protein binding"/>
    <property type="evidence" value="ECO:0000266"/>
    <property type="project" value="RGD"/>
</dbReference>
<dbReference type="GO" id="GO:0070061">
    <property type="term" value="F:fructose binding"/>
    <property type="evidence" value="ECO:0000266"/>
    <property type="project" value="RGD"/>
</dbReference>
<dbReference type="GO" id="GO:0004332">
    <property type="term" value="F:fructose-bisphosphate aldolase activity"/>
    <property type="evidence" value="ECO:0000250"/>
    <property type="project" value="UniProtKB"/>
</dbReference>
<dbReference type="GO" id="GO:0042802">
    <property type="term" value="F:identical protein binding"/>
    <property type="evidence" value="ECO:0000266"/>
    <property type="project" value="RGD"/>
</dbReference>
<dbReference type="GO" id="GO:0006754">
    <property type="term" value="P:ATP biosynthetic process"/>
    <property type="evidence" value="ECO:0000266"/>
    <property type="project" value="RGD"/>
</dbReference>
<dbReference type="GO" id="GO:0007339">
    <property type="term" value="P:binding of sperm to zona pellucida"/>
    <property type="evidence" value="ECO:0000266"/>
    <property type="project" value="RGD"/>
</dbReference>
<dbReference type="GO" id="GO:0030388">
    <property type="term" value="P:fructose 1,6-bisphosphate metabolic process"/>
    <property type="evidence" value="ECO:0000266"/>
    <property type="project" value="RGD"/>
</dbReference>
<dbReference type="GO" id="GO:0006000">
    <property type="term" value="P:fructose metabolic process"/>
    <property type="evidence" value="ECO:0000266"/>
    <property type="project" value="RGD"/>
</dbReference>
<dbReference type="GO" id="GO:0006096">
    <property type="term" value="P:glycolytic process"/>
    <property type="evidence" value="ECO:0000250"/>
    <property type="project" value="UniProtKB"/>
</dbReference>
<dbReference type="GO" id="GO:0019242">
    <property type="term" value="P:methylglyoxal biosynthetic process"/>
    <property type="evidence" value="ECO:0000315"/>
    <property type="project" value="RGD"/>
</dbReference>
<dbReference type="GO" id="GO:0046716">
    <property type="term" value="P:muscle cell cellular homeostasis"/>
    <property type="evidence" value="ECO:0000266"/>
    <property type="project" value="RGD"/>
</dbReference>
<dbReference type="GO" id="GO:0051289">
    <property type="term" value="P:protein homotetramerization"/>
    <property type="evidence" value="ECO:0000250"/>
    <property type="project" value="UniProtKB"/>
</dbReference>
<dbReference type="GO" id="GO:0008360">
    <property type="term" value="P:regulation of cell shape"/>
    <property type="evidence" value="ECO:0000266"/>
    <property type="project" value="RGD"/>
</dbReference>
<dbReference type="GO" id="GO:0043627">
    <property type="term" value="P:response to estrogen"/>
    <property type="evidence" value="ECO:0000270"/>
    <property type="project" value="RGD"/>
</dbReference>
<dbReference type="GO" id="GO:0001666">
    <property type="term" value="P:response to hypoxia"/>
    <property type="evidence" value="ECO:0000270"/>
    <property type="project" value="RGD"/>
</dbReference>
<dbReference type="GO" id="GO:0032496">
    <property type="term" value="P:response to lipopolysaccharide"/>
    <property type="evidence" value="ECO:0000270"/>
    <property type="project" value="RGD"/>
</dbReference>
<dbReference type="GO" id="GO:0035094">
    <property type="term" value="P:response to nicotine"/>
    <property type="evidence" value="ECO:0000270"/>
    <property type="project" value="RGD"/>
</dbReference>
<dbReference type="GO" id="GO:0006941">
    <property type="term" value="P:striated muscle contraction"/>
    <property type="evidence" value="ECO:0000266"/>
    <property type="project" value="RGD"/>
</dbReference>
<dbReference type="CDD" id="cd00948">
    <property type="entry name" value="FBP_aldolase_I_a"/>
    <property type="match status" value="1"/>
</dbReference>
<dbReference type="FunFam" id="3.20.20.70:FF:000021">
    <property type="entry name" value="Fructose-bisphosphate aldolase"/>
    <property type="match status" value="1"/>
</dbReference>
<dbReference type="Gene3D" id="3.20.20.70">
    <property type="entry name" value="Aldolase class I"/>
    <property type="match status" value="1"/>
</dbReference>
<dbReference type="InterPro" id="IPR029768">
    <property type="entry name" value="Aldolase_I_AS"/>
</dbReference>
<dbReference type="InterPro" id="IPR013785">
    <property type="entry name" value="Aldolase_TIM"/>
</dbReference>
<dbReference type="InterPro" id="IPR000741">
    <property type="entry name" value="FBA_I"/>
</dbReference>
<dbReference type="NCBIfam" id="NF033379">
    <property type="entry name" value="FrucBisAld_I"/>
    <property type="match status" value="1"/>
</dbReference>
<dbReference type="PANTHER" id="PTHR11627">
    <property type="entry name" value="FRUCTOSE-BISPHOSPHATE ALDOLASE"/>
    <property type="match status" value="1"/>
</dbReference>
<dbReference type="Pfam" id="PF00274">
    <property type="entry name" value="Glycolytic"/>
    <property type="match status" value="1"/>
</dbReference>
<dbReference type="SUPFAM" id="SSF51569">
    <property type="entry name" value="Aldolase"/>
    <property type="match status" value="1"/>
</dbReference>
<dbReference type="PROSITE" id="PS00158">
    <property type="entry name" value="ALDOLASE_CLASS_I"/>
    <property type="match status" value="1"/>
</dbReference>
<name>ALDOA_RAT</name>
<protein>
    <recommendedName>
        <fullName>Fructose-bisphosphate aldolase A</fullName>
        <ecNumber evidence="3">4.1.2.13</ecNumber>
    </recommendedName>
    <alternativeName>
        <fullName>Muscle-type aldolase</fullName>
    </alternativeName>
</protein>
<evidence type="ECO:0000250" key="1"/>
<evidence type="ECO:0000250" key="2">
    <source>
        <dbReference type="UniProtKB" id="P00883"/>
    </source>
</evidence>
<evidence type="ECO:0000250" key="3">
    <source>
        <dbReference type="UniProtKB" id="P04075"/>
    </source>
</evidence>
<evidence type="ECO:0000250" key="4">
    <source>
        <dbReference type="UniProtKB" id="P09972"/>
    </source>
</evidence>
<evidence type="ECO:0000269" key="5">
    <source>
    </source>
</evidence>
<evidence type="ECO:0000305" key="6"/>
<evidence type="ECO:0007744" key="7">
    <source>
    </source>
</evidence>
<gene>
    <name type="primary">Aldoa</name>
</gene>
<accession>P05065</accession>
<accession>Q63038</accession>
<proteinExistence type="evidence at protein level"/>
<reference key="1">
    <citation type="journal article" date="1986" name="J. Biol. Chem.">
        <title>Tissue-specific expression of rat aldolase A mRNAs. Three molecular species differing only in the 5'-terminal sequences.</title>
        <authorList>
            <person name="Mukai T."/>
            <person name="Joh K."/>
            <person name="Arai Y."/>
            <person name="Yatsuki H."/>
            <person name="Hori K."/>
        </authorList>
    </citation>
    <scope>NUCLEOTIDE SEQUENCE [MRNA]</scope>
</reference>
<reference key="2">
    <citation type="journal article" date="1985" name="Gene">
        <title>Rat aldolase A messenger RNA: the nucleotide sequence and multiple mRNA species with different 5'-terminal regions.</title>
        <authorList>
            <person name="Joh K."/>
            <person name="Mukai T."/>
            <person name="Yatsuki H."/>
            <person name="Hori K."/>
        </authorList>
    </citation>
    <scope>NUCLEOTIDE SEQUENCE [MRNA]</scope>
</reference>
<reference key="3">
    <citation type="journal article" date="1986" name="J. Mol. Biol.">
        <title>Expression of three mRNA species from a single rat aldolase A gene, differing in their 5' non-coding regions.</title>
        <authorList>
            <person name="Joh K."/>
            <person name="Arai Y."/>
            <person name="Mukai T."/>
            <person name="Hori K."/>
        </authorList>
    </citation>
    <scope>NUCLEOTIDE SEQUENCE [GENOMIC DNA]</scope>
</reference>
<reference key="4">
    <citation type="journal article" date="2004" name="Genome Res.">
        <title>The status, quality, and expansion of the NIH full-length cDNA project: the Mammalian Gene Collection (MGC).</title>
        <authorList>
            <consortium name="The MGC Project Team"/>
        </authorList>
    </citation>
    <scope>NUCLEOTIDE SEQUENCE [LARGE SCALE MRNA]</scope>
    <source>
        <tissue>Prostate</tissue>
    </source>
</reference>
<reference key="5">
    <citation type="submission" date="2007-07" db="UniProtKB">
        <authorList>
            <person name="Lubec G."/>
            <person name="Afjehi-Sadat L."/>
            <person name="Chen W.-Q."/>
            <person name="Kang S.U."/>
        </authorList>
    </citation>
    <scope>PROTEIN SEQUENCE OF 2-13; 15-22; 29-42; 70-99; 154-173; 209-215; 244-258; 290-312 AND 332-364</scope>
    <scope>IDENTIFICATION BY MASS SPECTROMETRY</scope>
    <source>
        <strain>Sprague-Dawley</strain>
        <tissue>Brain</tissue>
        <tissue>Spinal cord</tissue>
    </source>
</reference>
<reference key="6">
    <citation type="journal article" date="1984" name="Eur. J. Biochem.">
        <title>Two different aldolase A mRNA species in rat tissues.</title>
        <authorList>
            <person name="Tsutsumi R."/>
            <person name="Tsutsumi K."/>
            <person name="Numazaki M."/>
            <person name="Ishikawa K."/>
        </authorList>
    </citation>
    <scope>NUCLEOTIDE SEQUENCE [MRNA] OF 324-356</scope>
    <scope>TISSUE SPECIFICITY</scope>
    <source>
        <strain>Donryu</strain>
        <tissue>Hepatoma</tissue>
    </source>
</reference>
<reference key="7">
    <citation type="journal article" date="2012" name="Nat. Commun.">
        <title>Quantitative maps of protein phosphorylation sites across 14 different rat organs and tissues.</title>
        <authorList>
            <person name="Lundby A."/>
            <person name="Secher A."/>
            <person name="Lage K."/>
            <person name="Nordsborg N.B."/>
            <person name="Dmytriyev A."/>
            <person name="Lundby C."/>
            <person name="Olsen J.V."/>
        </authorList>
    </citation>
    <scope>PHOSPHORYLATION [LARGE SCALE ANALYSIS] AT TYR-5; THR-9 AND SER-132</scope>
    <scope>IDENTIFICATION BY MASS SPECTROMETRY [LARGE SCALE ANALYSIS]</scope>
</reference>